<protein>
    <recommendedName>
        <fullName>Uncharacterized protein ORF3</fullName>
    </recommendedName>
    <alternativeName>
        <fullName>ORFD</fullName>
    </alternativeName>
</protein>
<dbReference type="EMBL" id="M36968">
    <property type="protein sequence ID" value="AAA43080.1"/>
    <property type="molecule type" value="Genomic_RNA"/>
</dbReference>
<dbReference type="InterPro" id="IPR009588">
    <property type="entry name" value="FIV_Orf3"/>
</dbReference>
<dbReference type="Pfam" id="PF06712">
    <property type="entry name" value="DUF1199"/>
    <property type="match status" value="1"/>
</dbReference>
<name>YOR3_FIVSD</name>
<accession>P19031</accession>
<feature type="chain" id="PRO_0000085513" description="Uncharacterized protein ORF3">
    <location>
        <begin position="1"/>
        <end position="68"/>
    </location>
</feature>
<sequence length="68" mass="7678">MLDRNSKSVLVAFYRSGNIFRYNQCSDSMETSTISSPSRRIRNNFLGLLGTRGARLSRLSWGNDTSKS</sequence>
<reference key="1">
    <citation type="journal article" date="1990" name="J. Virol.">
        <title>Comparison of two host cell range variants of feline immunodeficiency virus.</title>
        <authorList>
            <person name="Phillips T.R."/>
            <person name="Talbott R.L."/>
            <person name="Lamont C."/>
            <person name="Muir S."/>
            <person name="Lovelace K.M."/>
            <person name="Elder J.H."/>
        </authorList>
    </citation>
    <scope>NUCLEOTIDE SEQUENCE [GENOMIC RNA]</scope>
    <source>
        <strain>Isolate PPR</strain>
    </source>
</reference>
<organism>
    <name type="scientific">Feline immunodeficiency virus (strain San Diego)</name>
    <name type="common">FIV</name>
    <dbReference type="NCBI Taxonomy" id="11675"/>
    <lineage>
        <taxon>Viruses</taxon>
        <taxon>Riboviria</taxon>
        <taxon>Pararnavirae</taxon>
        <taxon>Artverviricota</taxon>
        <taxon>Revtraviricetes</taxon>
        <taxon>Ortervirales</taxon>
        <taxon>Retroviridae</taxon>
        <taxon>Orthoretrovirinae</taxon>
        <taxon>Lentivirus</taxon>
        <taxon>Feline immunodeficiency virus</taxon>
    </lineage>
</organism>
<organismHost>
    <name type="scientific">Felidae</name>
    <name type="common">cat family</name>
    <dbReference type="NCBI Taxonomy" id="9681"/>
</organismHost>
<proteinExistence type="predicted"/>